<protein>
    <recommendedName>
        <fullName>Viral-enhancing factor</fullName>
        <shortName>Enhancin</shortName>
        <shortName>VEF</shortName>
    </recommendedName>
    <alternativeName>
        <fullName>104 kDa glycoprotein</fullName>
    </alternativeName>
    <alternativeName>
        <fullName>Synergistic factor</fullName>
    </alternativeName>
</protein>
<organism>
    <name type="scientific">Pseudalatia unipuncta granulosis virus</name>
    <name type="common">PuGV</name>
    <name type="synonym">Pseudalatia unipuncta granulovirus</name>
    <dbReference type="NCBI Taxonomy" id="36355"/>
    <lineage>
        <taxon>Viruses</taxon>
        <taxon>Viruses incertae sedis</taxon>
        <taxon>Naldaviricetes</taxon>
        <taxon>Lefavirales</taxon>
        <taxon>Baculoviridae</taxon>
        <taxon>Betabaculovirus</taxon>
        <taxon>Betabaculovirus myunipunctae</taxon>
    </lineage>
</organism>
<organismHost>
    <name type="scientific">Mythimna unipuncta</name>
    <name type="common">Armyworm moth</name>
    <name type="synonym">Pseudaletia unipuncta</name>
    <dbReference type="NCBI Taxonomy" id="103831"/>
</organismHost>
<sequence>MSYKVIVPATVLPPWLRVGENWIFARHRRTEVGVVLPANTKFRVRADFSRAGFTRPVIVRLLNNNRNTEREINLNNDQWMEVEHAHESVPFVDWPVGERNIMAEVYFEIDGPHIPLPVYVFNTRPVEHFKSEYRQSSSGYCFLYLDLVCMLVPPASKNALLDVNIFELHQFYNEIINYYDDLCGLVEDPYADTVDSNLPNKAAFVKADAGGPGGAYYGPFWTAPASSNLGDYLRISPTNWMVIHELGHAYDFVFTVNTILIEIWNNSLCDRIQYKWMNKTKRQQLARVYENRRPQKEATIQALIDNNSPFDNWGFFERLIIFTWLYNPQRGLDTLRNINHSYRVHATRNSSIPYPQIWSWLTTSAYDNFWLYFNLVGVYPADFYVNEHNKVVHFNLHLRALALGQSVRYPIKYIITDFDLVSKNYDIKQYLESNFDLVIPEELRQTDLLADVRVVCVIDDPSQIVGEPFSVYDGNERVFESTVATDGNMYLVGVGPGVYTLRAPRGKNKRYKLHLAHSPREPVHPANDHMYLLVTYPYYNQTLTYTPYVNSDLAVDMAHLFGSNDRRYVATIYFNPFEQTVTVHLNNIRAGRENNTTLYFEMVISNPFNGQSQTFTILEDNPTLRQGYYKFDVVTYSSIRLNMSVAGRLLFGDTFLPEGTTTLTMFPNQVLEPNLFPDGSALNRTLARLREQAAFLDNYSQLMYIENELRDSIYLASQLVDPASDEFVKYYPDYFRDPHTYVYLFRFRGLGDFVLLDLQIVPLLNLATVRIANNHNGPHSYFDTLYFKVELRDTNGAIVFSYSRRGNEPMTPEHHKFEVYSGYTVELFMREPGNRLQLIVNKMLDTALPSTQNIFARITDTQLVVGDTSIEDNLVTSINVDCGDDDNQKIRVVETLKMIAF</sequence>
<keyword id="KW-0325">Glycoprotein</keyword>
<keyword id="KW-0426">Late protein</keyword>
<reference key="1">
    <citation type="journal article" date="1995" name="J. Gen. Virol.">
        <title>Characterization of the Helicoverpa armigera and Pseudaletia unipuncta granulovirus enhancin genes.</title>
        <authorList>
            <person name="Roelvink P.W."/>
            <person name="Corsaro B.G."/>
            <person name="Granados R.R."/>
        </authorList>
    </citation>
    <scope>NUCLEOTIDE SEQUENCE [GENOMIC DNA]</scope>
    <source>
        <strain>Hawai</strain>
    </source>
</reference>
<accession>P41723</accession>
<proteinExistence type="inferred from homology"/>
<gene>
    <name type="primary">VEF</name>
</gene>
<evidence type="ECO:0000250" key="1"/>
<evidence type="ECO:0000255" key="2"/>
<evidence type="ECO:0000255" key="3">
    <source>
        <dbReference type="PROSITE-ProRule" id="PRU01060"/>
    </source>
</evidence>
<feature type="chain" id="PRO_0000132864" description="Viral-enhancing factor">
    <location>
        <begin position="1"/>
        <end position="901"/>
    </location>
</feature>
<feature type="domain" description="Peptidase M60" evidence="3">
    <location>
        <begin position="27"/>
        <end position="330"/>
    </location>
</feature>
<feature type="glycosylation site" description="N-linked (GlcNAc...) asparagine; by host" evidence="2">
    <location>
        <position position="265"/>
    </location>
</feature>
<feature type="glycosylation site" description="N-linked (GlcNAc...) asparagine; by host" evidence="2">
    <location>
        <position position="278"/>
    </location>
</feature>
<feature type="glycosylation site" description="N-linked (GlcNAc...) asparagine; by host" evidence="2">
    <location>
        <position position="339"/>
    </location>
</feature>
<feature type="glycosylation site" description="N-linked (GlcNAc...) asparagine; by host" evidence="2">
    <location>
        <position position="349"/>
    </location>
</feature>
<feature type="glycosylation site" description="N-linked (GlcNAc...) asparagine; by host" evidence="2">
    <location>
        <position position="540"/>
    </location>
</feature>
<feature type="glycosylation site" description="N-linked (GlcNAc...) asparagine; by host" evidence="2">
    <location>
        <position position="594"/>
    </location>
</feature>
<feature type="glycosylation site" description="N-linked (GlcNAc...) asparagine; by host" evidence="2">
    <location>
        <position position="595"/>
    </location>
</feature>
<feature type="glycosylation site" description="N-linked (GlcNAc...) asparagine; by host" evidence="2">
    <location>
        <position position="642"/>
    </location>
</feature>
<feature type="glycosylation site" description="N-linked (GlcNAc...) asparagine; by host" evidence="2">
    <location>
        <position position="683"/>
    </location>
</feature>
<feature type="glycosylation site" description="N-linked (GlcNAc...) asparagine; by host" evidence="2">
    <location>
        <position position="698"/>
    </location>
</feature>
<comment type="function">
    <text evidence="1">Involved in disruption of the peritrophic membrane and fusion of nucleocapsids with midgut cells.</text>
</comment>
<dbReference type="EMBL" id="D14871">
    <property type="protein sequence ID" value="BAA03587.1"/>
    <property type="molecule type" value="Genomic_DNA"/>
</dbReference>
<dbReference type="MEROPS" id="M60.004"/>
<dbReference type="GlyCosmos" id="P41723">
    <property type="glycosylation" value="10 sites, No reported glycans"/>
</dbReference>
<dbReference type="Gene3D" id="3.40.390.80">
    <property type="entry name" value="Peptidase M60, enhancin-like domain 2"/>
    <property type="match status" value="1"/>
</dbReference>
<dbReference type="InterPro" id="IPR004954">
    <property type="entry name" value="Mucin-bd"/>
</dbReference>
<dbReference type="InterPro" id="IPR031161">
    <property type="entry name" value="Peptidase_M60_dom"/>
</dbReference>
<dbReference type="Pfam" id="PF03272">
    <property type="entry name" value="Mucin_bdg"/>
    <property type="match status" value="1"/>
</dbReference>
<dbReference type="Pfam" id="PF13402">
    <property type="entry name" value="Peptidase_M60"/>
    <property type="match status" value="1"/>
</dbReference>
<dbReference type="SMART" id="SM01276">
    <property type="entry name" value="M60-like"/>
    <property type="match status" value="1"/>
</dbReference>
<dbReference type="PROSITE" id="PS51723">
    <property type="entry name" value="PEPTIDASE_M60"/>
    <property type="match status" value="1"/>
</dbReference>
<name>VEF_GVPU</name>